<accession>Q08814</accession>
<feature type="chain" id="PRO_0000217802" description="Photosystem I assembly protein Ycf3">
    <location>
        <begin position="1"/>
        <end position="167"/>
    </location>
</feature>
<feature type="repeat" description="TPR 1">
    <location>
        <begin position="35"/>
        <end position="68"/>
    </location>
</feature>
<feature type="repeat" description="TPR 2">
    <location>
        <begin position="72"/>
        <end position="105"/>
    </location>
</feature>
<feature type="repeat" description="TPR 3">
    <location>
        <begin position="120"/>
        <end position="153"/>
    </location>
</feature>
<comment type="function">
    <text evidence="1">Essential for the assembly of the photosystem I (PSI) complex. May act as a chaperone-like factor to guide the assembly of the PSI subunits.</text>
</comment>
<comment type="subcellular location">
    <subcellularLocation>
        <location evidence="1">Plastid</location>
        <location evidence="1">Chloroplast thylakoid membrane</location>
        <topology evidence="1">Peripheral membrane protein</topology>
    </subcellularLocation>
</comment>
<comment type="similarity">
    <text evidence="1">Belongs to the Ycf3 family.</text>
</comment>
<gene>
    <name evidence="1" type="primary">ycf3</name>
</gene>
<evidence type="ECO:0000255" key="1">
    <source>
        <dbReference type="HAMAP-Rule" id="MF_00439"/>
    </source>
</evidence>
<geneLocation type="chloroplast"/>
<sequence>MSRSQKNDNFIDKTFTILADLILKFLPTNINAKKAFSYYRDGMSAQSEGEYAEALANYYEALNLEEDPYDKSFILYNIGLIHASNGEYVKALDYYHKALEANNKLPQALNNIAVIYHYQAVKASEINDLETAQALFHEAAQYWKQAIKLAPSNYIEAQNWLLSTGRL</sequence>
<dbReference type="EMBL" id="X66698">
    <property type="protein sequence ID" value="CAA47240.1"/>
    <property type="molecule type" value="Genomic_DNA"/>
</dbReference>
<dbReference type="SMR" id="Q08814"/>
<dbReference type="eggNOG" id="KOG1124">
    <property type="taxonomic scope" value="Eukaryota"/>
</dbReference>
<dbReference type="GO" id="GO:0009535">
    <property type="term" value="C:chloroplast thylakoid membrane"/>
    <property type="evidence" value="ECO:0007669"/>
    <property type="project" value="UniProtKB-SubCell"/>
</dbReference>
<dbReference type="GO" id="GO:0015979">
    <property type="term" value="P:photosynthesis"/>
    <property type="evidence" value="ECO:0007669"/>
    <property type="project" value="UniProtKB-UniRule"/>
</dbReference>
<dbReference type="Gene3D" id="1.25.40.10">
    <property type="entry name" value="Tetratricopeptide repeat domain"/>
    <property type="match status" value="1"/>
</dbReference>
<dbReference type="HAMAP" id="MF_00439">
    <property type="entry name" value="Ycf3"/>
    <property type="match status" value="1"/>
</dbReference>
<dbReference type="InterPro" id="IPR022818">
    <property type="entry name" value="PSI_Ycf3_assembly"/>
</dbReference>
<dbReference type="InterPro" id="IPR011990">
    <property type="entry name" value="TPR-like_helical_dom_sf"/>
</dbReference>
<dbReference type="InterPro" id="IPR019734">
    <property type="entry name" value="TPR_rpt"/>
</dbReference>
<dbReference type="NCBIfam" id="NF002725">
    <property type="entry name" value="PRK02603.1"/>
    <property type="match status" value="1"/>
</dbReference>
<dbReference type="Pfam" id="PF00515">
    <property type="entry name" value="TPR_1"/>
    <property type="match status" value="1"/>
</dbReference>
<dbReference type="SMART" id="SM00028">
    <property type="entry name" value="TPR"/>
    <property type="match status" value="3"/>
</dbReference>
<dbReference type="SUPFAM" id="SSF48452">
    <property type="entry name" value="TPR-like"/>
    <property type="match status" value="1"/>
</dbReference>
<dbReference type="PROSITE" id="PS50005">
    <property type="entry name" value="TPR"/>
    <property type="match status" value="3"/>
</dbReference>
<dbReference type="PROSITE" id="PS50293">
    <property type="entry name" value="TPR_REGION"/>
    <property type="match status" value="1"/>
</dbReference>
<organism>
    <name type="scientific">Galdieria sulphuraria</name>
    <name type="common">Red alga</name>
    <dbReference type="NCBI Taxonomy" id="130081"/>
    <lineage>
        <taxon>Eukaryota</taxon>
        <taxon>Rhodophyta</taxon>
        <taxon>Bangiophyceae</taxon>
        <taxon>Galdieriales</taxon>
        <taxon>Galdieriaceae</taxon>
        <taxon>Galdieria</taxon>
    </lineage>
</organism>
<protein>
    <recommendedName>
        <fullName evidence="1">Photosystem I assembly protein Ycf3</fullName>
    </recommendedName>
</protein>
<reference key="1">
    <citation type="journal article" date="1993" name="Plant Mol. Biol.">
        <title>Organization of plastid-encoded ATPase genes and flanking regions including homologues of infB and tsf in the thermophilic red alga Galdieria sulphuraria.</title>
        <authorList>
            <person name="Kostrzewa M."/>
            <person name="Zetsche K."/>
        </authorList>
    </citation>
    <scope>NUCLEOTIDE SEQUENCE [GENOMIC DNA]</scope>
    <source>
        <strain>14-1-1 / Isolate 107.79/Goettingen</strain>
    </source>
</reference>
<name>YCF3_GALSU</name>
<keyword id="KW-0150">Chloroplast</keyword>
<keyword id="KW-0472">Membrane</keyword>
<keyword id="KW-0602">Photosynthesis</keyword>
<keyword id="KW-0934">Plastid</keyword>
<keyword id="KW-0677">Repeat</keyword>
<keyword id="KW-0793">Thylakoid</keyword>
<keyword id="KW-0802">TPR repeat</keyword>
<proteinExistence type="inferred from homology"/>